<reference key="1">
    <citation type="submission" date="2008-06" db="EMBL/GenBank/DDBJ databases">
        <title>Genome and proteome analysis of A. pleuropneumoniae serotype 7.</title>
        <authorList>
            <person name="Linke B."/>
            <person name="Buettner F."/>
            <person name="Martinez-Arias R."/>
            <person name="Goesmann A."/>
            <person name="Baltes N."/>
            <person name="Tegetmeyer H."/>
            <person name="Singh M."/>
            <person name="Gerlach G.F."/>
        </authorList>
    </citation>
    <scope>NUCLEOTIDE SEQUENCE [LARGE SCALE GENOMIC DNA]</scope>
    <source>
        <strain>AP76</strain>
    </source>
</reference>
<comment type="function">
    <text evidence="1">Required for insertion of 4Fe-4S clusters for at least IspG.</text>
</comment>
<comment type="cofactor">
    <cofactor evidence="1">
        <name>iron-sulfur cluster</name>
        <dbReference type="ChEBI" id="CHEBI:30408"/>
    </cofactor>
    <text evidence="1">Binds 1 iron-sulfur cluster per subunit.</text>
</comment>
<comment type="subunit">
    <text evidence="1">Homodimer.</text>
</comment>
<comment type="similarity">
    <text evidence="1">Belongs to the HesB/IscA family.</text>
</comment>
<name>ERPA_ACTP7</name>
<proteinExistence type="inferred from homology"/>
<gene>
    <name evidence="1" type="primary">erpA</name>
    <name type="ordered locus">APP7_1469</name>
</gene>
<organism>
    <name type="scientific">Actinobacillus pleuropneumoniae serotype 7 (strain AP76)</name>
    <dbReference type="NCBI Taxonomy" id="537457"/>
    <lineage>
        <taxon>Bacteria</taxon>
        <taxon>Pseudomonadati</taxon>
        <taxon>Pseudomonadota</taxon>
        <taxon>Gammaproteobacteria</taxon>
        <taxon>Pasteurellales</taxon>
        <taxon>Pasteurellaceae</taxon>
        <taxon>Actinobacillus</taxon>
    </lineage>
</organism>
<accession>B3H296</accession>
<protein>
    <recommendedName>
        <fullName evidence="1">Iron-sulfur cluster insertion protein ErpA</fullName>
    </recommendedName>
</protein>
<sequence length="113" mass="12135">MNDIQIPIIFTDAAAKKVKSLIEGEDNPNLRLRVYITGGGCSGFQYGFTFDDQINEGDLTIENQNVGLVVDPMSLQYLIGGTVDYTEGLDGSRFVVQNPNASSTCGCGSSFSI</sequence>
<keyword id="KW-0408">Iron</keyword>
<keyword id="KW-0411">Iron-sulfur</keyword>
<keyword id="KW-0479">Metal-binding</keyword>
<feature type="chain" id="PRO_1000144892" description="Iron-sulfur cluster insertion protein ErpA">
    <location>
        <begin position="1"/>
        <end position="113"/>
    </location>
</feature>
<feature type="binding site" evidence="1">
    <location>
        <position position="41"/>
    </location>
    <ligand>
        <name>iron-sulfur cluster</name>
        <dbReference type="ChEBI" id="CHEBI:30408"/>
    </ligand>
</feature>
<feature type="binding site" evidence="1">
    <location>
        <position position="105"/>
    </location>
    <ligand>
        <name>iron-sulfur cluster</name>
        <dbReference type="ChEBI" id="CHEBI:30408"/>
    </ligand>
</feature>
<feature type="binding site" evidence="1">
    <location>
        <position position="107"/>
    </location>
    <ligand>
        <name>iron-sulfur cluster</name>
        <dbReference type="ChEBI" id="CHEBI:30408"/>
    </ligand>
</feature>
<dbReference type="EMBL" id="CP001091">
    <property type="protein sequence ID" value="ACE62121.1"/>
    <property type="molecule type" value="Genomic_DNA"/>
</dbReference>
<dbReference type="RefSeq" id="WP_005617946.1">
    <property type="nucleotide sequence ID" value="NC_010939.1"/>
</dbReference>
<dbReference type="SMR" id="B3H296"/>
<dbReference type="KEGG" id="apa:APP7_1469"/>
<dbReference type="HOGENOM" id="CLU_069054_5_3_6"/>
<dbReference type="Proteomes" id="UP000001226">
    <property type="component" value="Chromosome"/>
</dbReference>
<dbReference type="GO" id="GO:0005829">
    <property type="term" value="C:cytosol"/>
    <property type="evidence" value="ECO:0007669"/>
    <property type="project" value="TreeGrafter"/>
</dbReference>
<dbReference type="GO" id="GO:0051537">
    <property type="term" value="F:2 iron, 2 sulfur cluster binding"/>
    <property type="evidence" value="ECO:0007669"/>
    <property type="project" value="TreeGrafter"/>
</dbReference>
<dbReference type="GO" id="GO:0051539">
    <property type="term" value="F:4 iron, 4 sulfur cluster binding"/>
    <property type="evidence" value="ECO:0007669"/>
    <property type="project" value="TreeGrafter"/>
</dbReference>
<dbReference type="GO" id="GO:0005506">
    <property type="term" value="F:iron ion binding"/>
    <property type="evidence" value="ECO:0007669"/>
    <property type="project" value="UniProtKB-UniRule"/>
</dbReference>
<dbReference type="GO" id="GO:0016226">
    <property type="term" value="P:iron-sulfur cluster assembly"/>
    <property type="evidence" value="ECO:0007669"/>
    <property type="project" value="UniProtKB-UniRule"/>
</dbReference>
<dbReference type="FunFam" id="2.60.300.12:FF:000002">
    <property type="entry name" value="Iron-sulfur cluster insertion protein ErpA"/>
    <property type="match status" value="1"/>
</dbReference>
<dbReference type="Gene3D" id="2.60.300.12">
    <property type="entry name" value="HesB-like domain"/>
    <property type="match status" value="1"/>
</dbReference>
<dbReference type="HAMAP" id="MF_01380">
    <property type="entry name" value="Fe_S_insert_ErpA"/>
    <property type="match status" value="1"/>
</dbReference>
<dbReference type="InterPro" id="IPR000361">
    <property type="entry name" value="FeS_biogenesis"/>
</dbReference>
<dbReference type="InterPro" id="IPR016092">
    <property type="entry name" value="FeS_cluster_insertion"/>
</dbReference>
<dbReference type="InterPro" id="IPR017870">
    <property type="entry name" value="FeS_cluster_insertion_CS"/>
</dbReference>
<dbReference type="InterPro" id="IPR023063">
    <property type="entry name" value="FeS_cluster_insertion_RrpA"/>
</dbReference>
<dbReference type="InterPro" id="IPR035903">
    <property type="entry name" value="HesB-like_dom_sf"/>
</dbReference>
<dbReference type="NCBIfam" id="TIGR00049">
    <property type="entry name" value="iron-sulfur cluster assembly accessory protein"/>
    <property type="match status" value="1"/>
</dbReference>
<dbReference type="NCBIfam" id="NF010147">
    <property type="entry name" value="PRK13623.1"/>
    <property type="match status" value="1"/>
</dbReference>
<dbReference type="PANTHER" id="PTHR43011">
    <property type="entry name" value="IRON-SULFUR CLUSTER ASSEMBLY 2 HOMOLOG, MITOCHONDRIAL"/>
    <property type="match status" value="1"/>
</dbReference>
<dbReference type="PANTHER" id="PTHR43011:SF1">
    <property type="entry name" value="IRON-SULFUR CLUSTER ASSEMBLY 2 HOMOLOG, MITOCHONDRIAL"/>
    <property type="match status" value="1"/>
</dbReference>
<dbReference type="Pfam" id="PF01521">
    <property type="entry name" value="Fe-S_biosyn"/>
    <property type="match status" value="1"/>
</dbReference>
<dbReference type="SUPFAM" id="SSF89360">
    <property type="entry name" value="HesB-like domain"/>
    <property type="match status" value="1"/>
</dbReference>
<dbReference type="PROSITE" id="PS01152">
    <property type="entry name" value="HESB"/>
    <property type="match status" value="1"/>
</dbReference>
<evidence type="ECO:0000255" key="1">
    <source>
        <dbReference type="HAMAP-Rule" id="MF_01380"/>
    </source>
</evidence>